<accession>Q31XA6</accession>
<dbReference type="EC" id="3.1.3.5" evidence="1"/>
<dbReference type="EC" id="3.1.3.6" evidence="1"/>
<dbReference type="EC" id="3.6.1.11" evidence="1"/>
<dbReference type="EMBL" id="CP000036">
    <property type="protein sequence ID" value="ABB67302.1"/>
    <property type="molecule type" value="Genomic_DNA"/>
</dbReference>
<dbReference type="RefSeq" id="WP_001295182.1">
    <property type="nucleotide sequence ID" value="NC_007613.1"/>
</dbReference>
<dbReference type="SMR" id="Q31XA6"/>
<dbReference type="GeneID" id="93779262"/>
<dbReference type="KEGG" id="sbo:SBO_2776"/>
<dbReference type="HOGENOM" id="CLU_045192_1_2_6"/>
<dbReference type="Proteomes" id="UP000007067">
    <property type="component" value="Chromosome"/>
</dbReference>
<dbReference type="GO" id="GO:0005737">
    <property type="term" value="C:cytoplasm"/>
    <property type="evidence" value="ECO:0007669"/>
    <property type="project" value="UniProtKB-SubCell"/>
</dbReference>
<dbReference type="GO" id="GO:0008254">
    <property type="term" value="F:3'-nucleotidase activity"/>
    <property type="evidence" value="ECO:0007669"/>
    <property type="project" value="UniProtKB-UniRule"/>
</dbReference>
<dbReference type="GO" id="GO:0008253">
    <property type="term" value="F:5'-nucleotidase activity"/>
    <property type="evidence" value="ECO:0007669"/>
    <property type="project" value="UniProtKB-UniRule"/>
</dbReference>
<dbReference type="GO" id="GO:0004309">
    <property type="term" value="F:exopolyphosphatase activity"/>
    <property type="evidence" value="ECO:0007669"/>
    <property type="project" value="UniProtKB-UniRule"/>
</dbReference>
<dbReference type="GO" id="GO:0046872">
    <property type="term" value="F:metal ion binding"/>
    <property type="evidence" value="ECO:0007669"/>
    <property type="project" value="UniProtKB-UniRule"/>
</dbReference>
<dbReference type="GO" id="GO:0000166">
    <property type="term" value="F:nucleotide binding"/>
    <property type="evidence" value="ECO:0007669"/>
    <property type="project" value="UniProtKB-KW"/>
</dbReference>
<dbReference type="FunFam" id="3.40.1210.10:FF:000001">
    <property type="entry name" value="5'/3'-nucleotidase SurE"/>
    <property type="match status" value="1"/>
</dbReference>
<dbReference type="Gene3D" id="3.40.1210.10">
    <property type="entry name" value="Survival protein SurE-like phosphatase/nucleotidase"/>
    <property type="match status" value="1"/>
</dbReference>
<dbReference type="HAMAP" id="MF_00060">
    <property type="entry name" value="SurE"/>
    <property type="match status" value="1"/>
</dbReference>
<dbReference type="InterPro" id="IPR030048">
    <property type="entry name" value="SurE"/>
</dbReference>
<dbReference type="InterPro" id="IPR002828">
    <property type="entry name" value="SurE-like_Pase/nucleotidase"/>
</dbReference>
<dbReference type="InterPro" id="IPR036523">
    <property type="entry name" value="SurE-like_sf"/>
</dbReference>
<dbReference type="NCBIfam" id="NF001488">
    <property type="entry name" value="PRK00346.1-1"/>
    <property type="match status" value="1"/>
</dbReference>
<dbReference type="NCBIfam" id="NF001489">
    <property type="entry name" value="PRK00346.1-3"/>
    <property type="match status" value="1"/>
</dbReference>
<dbReference type="NCBIfam" id="NF001490">
    <property type="entry name" value="PRK00346.1-4"/>
    <property type="match status" value="1"/>
</dbReference>
<dbReference type="NCBIfam" id="TIGR00087">
    <property type="entry name" value="surE"/>
    <property type="match status" value="1"/>
</dbReference>
<dbReference type="PANTHER" id="PTHR30457">
    <property type="entry name" value="5'-NUCLEOTIDASE SURE"/>
    <property type="match status" value="1"/>
</dbReference>
<dbReference type="PANTHER" id="PTHR30457:SF12">
    <property type="entry name" value="5'_3'-NUCLEOTIDASE SURE"/>
    <property type="match status" value="1"/>
</dbReference>
<dbReference type="Pfam" id="PF01975">
    <property type="entry name" value="SurE"/>
    <property type="match status" value="1"/>
</dbReference>
<dbReference type="SUPFAM" id="SSF64167">
    <property type="entry name" value="SurE-like"/>
    <property type="match status" value="1"/>
</dbReference>
<gene>
    <name evidence="1" type="primary">surE</name>
    <name type="ordered locus">SBO_2776</name>
</gene>
<keyword id="KW-0963">Cytoplasm</keyword>
<keyword id="KW-0378">Hydrolase</keyword>
<keyword id="KW-0479">Metal-binding</keyword>
<keyword id="KW-0547">Nucleotide-binding</keyword>
<name>SURE_SHIBS</name>
<reference key="1">
    <citation type="journal article" date="2005" name="Nucleic Acids Res.">
        <title>Genome dynamics and diversity of Shigella species, the etiologic agents of bacillary dysentery.</title>
        <authorList>
            <person name="Yang F."/>
            <person name="Yang J."/>
            <person name="Zhang X."/>
            <person name="Chen L."/>
            <person name="Jiang Y."/>
            <person name="Yan Y."/>
            <person name="Tang X."/>
            <person name="Wang J."/>
            <person name="Xiong Z."/>
            <person name="Dong J."/>
            <person name="Xue Y."/>
            <person name="Zhu Y."/>
            <person name="Xu X."/>
            <person name="Sun L."/>
            <person name="Chen S."/>
            <person name="Nie H."/>
            <person name="Peng J."/>
            <person name="Xu J."/>
            <person name="Wang Y."/>
            <person name="Yuan Z."/>
            <person name="Wen Y."/>
            <person name="Yao Z."/>
            <person name="Shen Y."/>
            <person name="Qiang B."/>
            <person name="Hou Y."/>
            <person name="Yu J."/>
            <person name="Jin Q."/>
        </authorList>
    </citation>
    <scope>NUCLEOTIDE SEQUENCE [LARGE SCALE GENOMIC DNA]</scope>
    <source>
        <strain>Sb227</strain>
    </source>
</reference>
<evidence type="ECO:0000255" key="1">
    <source>
        <dbReference type="HAMAP-Rule" id="MF_00060"/>
    </source>
</evidence>
<feature type="chain" id="PRO_0000235649" description="5'/3'-nucleotidase SurE">
    <location>
        <begin position="1"/>
        <end position="253"/>
    </location>
</feature>
<feature type="binding site" evidence="1">
    <location>
        <position position="8"/>
    </location>
    <ligand>
        <name>a divalent metal cation</name>
        <dbReference type="ChEBI" id="CHEBI:60240"/>
    </ligand>
</feature>
<feature type="binding site" evidence="1">
    <location>
        <position position="9"/>
    </location>
    <ligand>
        <name>a divalent metal cation</name>
        <dbReference type="ChEBI" id="CHEBI:60240"/>
    </ligand>
</feature>
<feature type="binding site" evidence="1">
    <location>
        <position position="39"/>
    </location>
    <ligand>
        <name>a divalent metal cation</name>
        <dbReference type="ChEBI" id="CHEBI:60240"/>
    </ligand>
</feature>
<feature type="binding site" evidence="1">
    <location>
        <position position="92"/>
    </location>
    <ligand>
        <name>a divalent metal cation</name>
        <dbReference type="ChEBI" id="CHEBI:60240"/>
    </ligand>
</feature>
<organism>
    <name type="scientific">Shigella boydii serotype 4 (strain Sb227)</name>
    <dbReference type="NCBI Taxonomy" id="300268"/>
    <lineage>
        <taxon>Bacteria</taxon>
        <taxon>Pseudomonadati</taxon>
        <taxon>Pseudomonadota</taxon>
        <taxon>Gammaproteobacteria</taxon>
        <taxon>Enterobacterales</taxon>
        <taxon>Enterobacteriaceae</taxon>
        <taxon>Shigella</taxon>
    </lineage>
</organism>
<comment type="function">
    <text evidence="1">Nucleotidase with a broad substrate specificity as it can dephosphorylate various ribo- and deoxyribonucleoside 5'-monophosphates and ribonucleoside 3'-monophosphates with highest affinity to 3'-AMP. Also hydrolyzes polyphosphate (exopolyphosphatase activity) with the preference for short-chain-length substrates (P20-25). Might be involved in the regulation of dNTP and NTP pools, and in the turnover of 3'-mononucleotides produced by numerous intracellular RNases (T1, T2, and F) during the degradation of various RNAs.</text>
</comment>
<comment type="catalytic activity">
    <reaction evidence="1">
        <text>a ribonucleoside 5'-phosphate + H2O = a ribonucleoside + phosphate</text>
        <dbReference type="Rhea" id="RHEA:12484"/>
        <dbReference type="ChEBI" id="CHEBI:15377"/>
        <dbReference type="ChEBI" id="CHEBI:18254"/>
        <dbReference type="ChEBI" id="CHEBI:43474"/>
        <dbReference type="ChEBI" id="CHEBI:58043"/>
        <dbReference type="EC" id="3.1.3.5"/>
    </reaction>
</comment>
<comment type="catalytic activity">
    <reaction evidence="1">
        <text>a ribonucleoside 3'-phosphate + H2O = a ribonucleoside + phosphate</text>
        <dbReference type="Rhea" id="RHEA:10144"/>
        <dbReference type="ChEBI" id="CHEBI:13197"/>
        <dbReference type="ChEBI" id="CHEBI:15377"/>
        <dbReference type="ChEBI" id="CHEBI:18254"/>
        <dbReference type="ChEBI" id="CHEBI:43474"/>
        <dbReference type="EC" id="3.1.3.6"/>
    </reaction>
</comment>
<comment type="catalytic activity">
    <reaction evidence="1">
        <text>[phosphate](n) + H2O = [phosphate](n-1) + phosphate + H(+)</text>
        <dbReference type="Rhea" id="RHEA:21528"/>
        <dbReference type="Rhea" id="RHEA-COMP:9859"/>
        <dbReference type="Rhea" id="RHEA-COMP:14279"/>
        <dbReference type="ChEBI" id="CHEBI:15377"/>
        <dbReference type="ChEBI" id="CHEBI:15378"/>
        <dbReference type="ChEBI" id="CHEBI:16838"/>
        <dbReference type="ChEBI" id="CHEBI:43474"/>
        <dbReference type="EC" id="3.6.1.11"/>
    </reaction>
</comment>
<comment type="cofactor">
    <cofactor evidence="1">
        <name>a divalent metal cation</name>
        <dbReference type="ChEBI" id="CHEBI:60240"/>
    </cofactor>
    <text evidence="1">Binds 1 divalent metal cation per subunit.</text>
</comment>
<comment type="subcellular location">
    <subcellularLocation>
        <location evidence="1">Cytoplasm</location>
    </subcellularLocation>
</comment>
<comment type="similarity">
    <text evidence="1">Belongs to the SurE nucleotidase family.</text>
</comment>
<proteinExistence type="inferred from homology"/>
<sequence>MRILLSNDDGVHAPGIQTLAKALREFADVQVVAPDRNRSGASNSLTLESSLRTFTFENGDIAVQMGTPTDCVYLGVNALMRPRPDIVVSGINAGPNLGDDVIYSGTVAAAMEGRHLGFPALAVSLDGHKHYDTAAAVTCSILRALCKEPLRTGRILNINVPDLPLDQIKGIRVTRCGTRHPADQVIPQQDPRGNTLYWIGPPGGKCDAGPGTDFAAVDEGYVSITPLHVDLTAHSAQDVVSDWLNSVGVGTQW</sequence>
<protein>
    <recommendedName>
        <fullName evidence="1">5'/3'-nucleotidase SurE</fullName>
        <ecNumber evidence="1">3.1.3.5</ecNumber>
        <ecNumber evidence="1">3.1.3.6</ecNumber>
    </recommendedName>
    <alternativeName>
        <fullName evidence="1">Exopolyphosphatase</fullName>
        <ecNumber evidence="1">3.6.1.11</ecNumber>
    </alternativeName>
    <alternativeName>
        <fullName evidence="1">Nucleoside monophosphate phosphohydrolase</fullName>
    </alternativeName>
</protein>